<comment type="function">
    <text evidence="1">Relaxes both positive and negative superturns and exhibits a strong decatenase activity.</text>
</comment>
<comment type="catalytic activity">
    <reaction evidence="1">
        <text>ATP-dependent breakage, passage and rejoining of double-stranded DNA.</text>
        <dbReference type="EC" id="5.6.2.2"/>
    </reaction>
</comment>
<comment type="subunit">
    <text evidence="1">Homodimer. Heterotetramer of two Top6A and two Top6B chains.</text>
</comment>
<comment type="similarity">
    <text evidence="1">Belongs to the TOP6B family.</text>
</comment>
<sequence>MSAKEKFTSLSPAEFFKRNPELAGFPNPARALYQTVRELIENSLDATDVHGILPNIKITIDLIDEARQIYKVNVVDNGIGIPPQEVPNAFGRVLYSSKYVNRQTRGMYGLGVKAAVLYSQMHQDKPIEIETSPANSKRIYTFKLKIDINKNEPIIVERGSVENTRGFHGTSVAISIPGDWPKAKSRIYEYIKRTYIITPYAEFIFKDPEGNVTYYPRLTNKIPKPPQEVKPHPYGVDREEIKILINNLKRDYTIKEFLVNEFQSIGDTTADKILELAGLKPNKKVKNLTEEEITRLVETFKKYEDFRSPSADSLSVIGEDLIELGLKKIFNPDFAASITRKPKAYQGHPFIVEAGVAFGGSIPVGEEPIVLRYANKIPLIYDEKSDVIWKVVEELDWKRYGIESDQYQMVVMVHLCSTKIPYKSAGKESIAEVEDIEKEIKNALMEVARKLKQYLSEKRKEQEAKKKLLAYLKYIPEVSRSLATFLASGNKELVSKYQNEISEGLFKLISKKLDLINIEEYRKVYRVDSE</sequence>
<feature type="chain" id="PRO_1000205143" description="Type 2 DNA topoisomerase 6 subunit B">
    <location>
        <begin position="1"/>
        <end position="530"/>
    </location>
</feature>
<feature type="binding site" evidence="1">
    <location>
        <position position="42"/>
    </location>
    <ligand>
        <name>ATP</name>
        <dbReference type="ChEBI" id="CHEBI:30616"/>
    </ligand>
</feature>
<feature type="binding site" evidence="1">
    <location>
        <position position="76"/>
    </location>
    <ligand>
        <name>ATP</name>
        <dbReference type="ChEBI" id="CHEBI:30616"/>
    </ligand>
</feature>
<feature type="binding site" evidence="1">
    <location>
        <begin position="97"/>
        <end position="98"/>
    </location>
    <ligand>
        <name>ATP</name>
        <dbReference type="ChEBI" id="CHEBI:30616"/>
    </ligand>
</feature>
<feature type="binding site" evidence="1">
    <location>
        <begin position="106"/>
        <end position="113"/>
    </location>
    <ligand>
        <name>ATP</name>
        <dbReference type="ChEBI" id="CHEBI:30616"/>
    </ligand>
</feature>
<feature type="binding site" evidence="1">
    <location>
        <position position="427"/>
    </location>
    <ligand>
        <name>ATP</name>
        <dbReference type="ChEBI" id="CHEBI:30616"/>
    </ligand>
</feature>
<protein>
    <recommendedName>
        <fullName evidence="1">Type 2 DNA topoisomerase 6 subunit B</fullName>
        <ecNumber evidence="1">5.6.2.2</ecNumber>
    </recommendedName>
    <alternativeName>
        <fullName evidence="1">Type II DNA topoisomerase VI subunit B</fullName>
        <shortName evidence="1">TopoVI-B</shortName>
    </alternativeName>
</protein>
<reference key="1">
    <citation type="journal article" date="2009" name="Proc. Natl. Acad. Sci. U.S.A.">
        <title>Biogeography of the Sulfolobus islandicus pan-genome.</title>
        <authorList>
            <person name="Reno M.L."/>
            <person name="Held N.L."/>
            <person name="Fields C.J."/>
            <person name="Burke P.V."/>
            <person name="Whitaker R.J."/>
        </authorList>
    </citation>
    <scope>NUCLEOTIDE SEQUENCE [LARGE SCALE GENOMIC DNA]</scope>
    <source>
        <strain>M.16.4 / Kamchatka #3</strain>
    </source>
</reference>
<gene>
    <name evidence="1" type="primary">top6B</name>
    <name type="ordered locus">M164_1239</name>
</gene>
<dbReference type="EC" id="5.6.2.2" evidence="1"/>
<dbReference type="EMBL" id="CP001402">
    <property type="protein sequence ID" value="ACR41843.1"/>
    <property type="molecule type" value="Genomic_DNA"/>
</dbReference>
<dbReference type="RefSeq" id="WP_012711263.1">
    <property type="nucleotide sequence ID" value="NC_012726.1"/>
</dbReference>
<dbReference type="SMR" id="C4KGX9"/>
<dbReference type="KEGG" id="sid:M164_1239"/>
<dbReference type="HOGENOM" id="CLU_006403_0_0_2"/>
<dbReference type="Proteomes" id="UP000001479">
    <property type="component" value="Chromosome"/>
</dbReference>
<dbReference type="GO" id="GO:0005524">
    <property type="term" value="F:ATP binding"/>
    <property type="evidence" value="ECO:0007669"/>
    <property type="project" value="UniProtKB-UniRule"/>
</dbReference>
<dbReference type="GO" id="GO:0003677">
    <property type="term" value="F:DNA binding"/>
    <property type="evidence" value="ECO:0007669"/>
    <property type="project" value="UniProtKB-UniRule"/>
</dbReference>
<dbReference type="GO" id="GO:0003918">
    <property type="term" value="F:DNA topoisomerase type II (double strand cut, ATP-hydrolyzing) activity"/>
    <property type="evidence" value="ECO:0007669"/>
    <property type="project" value="UniProtKB-UniRule"/>
</dbReference>
<dbReference type="GO" id="GO:0006265">
    <property type="term" value="P:DNA topological change"/>
    <property type="evidence" value="ECO:0007669"/>
    <property type="project" value="UniProtKB-UniRule"/>
</dbReference>
<dbReference type="CDD" id="cd16933">
    <property type="entry name" value="HATPase_TopVIB-like"/>
    <property type="match status" value="1"/>
</dbReference>
<dbReference type="CDD" id="cd00823">
    <property type="entry name" value="TopoIIB_Trans"/>
    <property type="match status" value="1"/>
</dbReference>
<dbReference type="FunFam" id="1.10.8.50:FF:000014">
    <property type="entry name" value="Type 2 DNA topoisomerase 6 subunit B"/>
    <property type="match status" value="1"/>
</dbReference>
<dbReference type="FunFam" id="3.30.230.10:FF:000091">
    <property type="entry name" value="Type 2 DNA topoisomerase 6 subunit B"/>
    <property type="match status" value="1"/>
</dbReference>
<dbReference type="FunFam" id="3.30.565.10:FF:000062">
    <property type="entry name" value="Type 2 DNA topoisomerase 6 subunit B"/>
    <property type="match status" value="1"/>
</dbReference>
<dbReference type="Gene3D" id="1.10.8.50">
    <property type="match status" value="1"/>
</dbReference>
<dbReference type="Gene3D" id="3.30.230.10">
    <property type="match status" value="1"/>
</dbReference>
<dbReference type="Gene3D" id="3.30.565.10">
    <property type="entry name" value="Histidine kinase-like ATPase, C-terminal domain"/>
    <property type="match status" value="1"/>
</dbReference>
<dbReference type="HAMAP" id="MF_00322">
    <property type="entry name" value="Top6B"/>
    <property type="match status" value="1"/>
</dbReference>
<dbReference type="InterPro" id="IPR036890">
    <property type="entry name" value="HATPase_C_sf"/>
</dbReference>
<dbReference type="InterPro" id="IPR020568">
    <property type="entry name" value="Ribosomal_Su5_D2-typ_SF"/>
</dbReference>
<dbReference type="InterPro" id="IPR010979">
    <property type="entry name" value="Ribosomal_uS13-like_H2TH"/>
</dbReference>
<dbReference type="InterPro" id="IPR014721">
    <property type="entry name" value="Ribsml_uS5_D2-typ_fold_subgr"/>
</dbReference>
<dbReference type="InterPro" id="IPR005734">
    <property type="entry name" value="TopoVI_B"/>
</dbReference>
<dbReference type="InterPro" id="IPR015320">
    <property type="entry name" value="TopoVI_B_transducer"/>
</dbReference>
<dbReference type="NCBIfam" id="NF003218">
    <property type="entry name" value="PRK04184.1"/>
    <property type="match status" value="1"/>
</dbReference>
<dbReference type="NCBIfam" id="TIGR01052">
    <property type="entry name" value="top6b"/>
    <property type="match status" value="1"/>
</dbReference>
<dbReference type="PANTHER" id="PTHR48444">
    <property type="entry name" value="DNA TOPOISOMERASE 6 SUBUNIT B"/>
    <property type="match status" value="1"/>
</dbReference>
<dbReference type="PANTHER" id="PTHR48444:SF1">
    <property type="entry name" value="DNA TOPOISOMERASE 6 SUBUNIT B"/>
    <property type="match status" value="1"/>
</dbReference>
<dbReference type="Pfam" id="PF02518">
    <property type="entry name" value="HATPase_c"/>
    <property type="match status" value="1"/>
</dbReference>
<dbReference type="Pfam" id="PF05833">
    <property type="entry name" value="NFACT_N"/>
    <property type="match status" value="1"/>
</dbReference>
<dbReference type="Pfam" id="PF09239">
    <property type="entry name" value="Topo-VIb_trans"/>
    <property type="match status" value="1"/>
</dbReference>
<dbReference type="PIRSF" id="PIRSF006553">
    <property type="entry name" value="TopoVI_B"/>
    <property type="match status" value="1"/>
</dbReference>
<dbReference type="SMART" id="SM00387">
    <property type="entry name" value="HATPase_c"/>
    <property type="match status" value="1"/>
</dbReference>
<dbReference type="SUPFAM" id="SSF55874">
    <property type="entry name" value="ATPase domain of HSP90 chaperone/DNA topoisomerase II/histidine kinase"/>
    <property type="match status" value="1"/>
</dbReference>
<dbReference type="SUPFAM" id="SSF54211">
    <property type="entry name" value="Ribosomal protein S5 domain 2-like"/>
    <property type="match status" value="1"/>
</dbReference>
<dbReference type="SUPFAM" id="SSF46946">
    <property type="entry name" value="S13-like H2TH domain"/>
    <property type="match status" value="1"/>
</dbReference>
<accession>C4KGX9</accession>
<proteinExistence type="inferred from homology"/>
<name>TOP6B_SACI6</name>
<keyword id="KW-0067">ATP-binding</keyword>
<keyword id="KW-0238">DNA-binding</keyword>
<keyword id="KW-0413">Isomerase</keyword>
<keyword id="KW-0547">Nucleotide-binding</keyword>
<keyword id="KW-0799">Topoisomerase</keyword>
<evidence type="ECO:0000255" key="1">
    <source>
        <dbReference type="HAMAP-Rule" id="MF_00322"/>
    </source>
</evidence>
<organism>
    <name type="scientific">Saccharolobus islandicus (strain M.16.4 / Kamchatka #3)</name>
    <name type="common">Sulfolobus islandicus</name>
    <dbReference type="NCBI Taxonomy" id="426118"/>
    <lineage>
        <taxon>Archaea</taxon>
        <taxon>Thermoproteota</taxon>
        <taxon>Thermoprotei</taxon>
        <taxon>Sulfolobales</taxon>
        <taxon>Sulfolobaceae</taxon>
        <taxon>Saccharolobus</taxon>
    </lineage>
</organism>